<sequence length="434" mass="46632">MEHLDLGPFSRASGTVRLPGSKSISNRVLLLAALAEGETTITNLLDSDDTRVMLDALEKLGVKFKRDGDTCVVTGTRGALPAARADLFLGNAGTAVRPLTAALAVNGGDYRIHGVPRMHERPIGDLVDGLRQIGAKIDYEENEGFPPLRIRPAQISVDAPIRVRGDVSSQFLTALLMTLPLVKTESGETIVEVSGELISKPYIEITIRLMERFGIKVERFGWERFTIPSGVRYQSPGKIMVEGDASSASYFLAAGALGGGPLRVEGVGRASIQGDVGFATALMKMGANVTMGDDWIEVRGVGNDHGKLDPIDMDFNLIPDAAMTIAVAALFADGTTTLRNIGSWRVKETDRIAAMATELSKVGAKVQAGEDFLVVTPPEQLTPNAAIDTYDDHRMAMCFSLVSLGGVPVRINDPKCVGKTFPDYFERFLALTQP</sequence>
<evidence type="ECO:0000255" key="1">
    <source>
        <dbReference type="HAMAP-Rule" id="MF_00210"/>
    </source>
</evidence>
<keyword id="KW-0028">Amino-acid biosynthesis</keyword>
<keyword id="KW-0057">Aromatic amino acid biosynthesis</keyword>
<keyword id="KW-0963">Cytoplasm</keyword>
<keyword id="KW-1185">Reference proteome</keyword>
<keyword id="KW-0808">Transferase</keyword>
<comment type="function">
    <text evidence="1">Catalyzes the transfer of the enolpyruvyl moiety of phosphoenolpyruvate (PEP) to the 5-hydroxyl of shikimate-3-phosphate (S3P) to produce enolpyruvyl shikimate-3-phosphate and inorganic phosphate.</text>
</comment>
<comment type="catalytic activity">
    <reaction evidence="1">
        <text>3-phosphoshikimate + phosphoenolpyruvate = 5-O-(1-carboxyvinyl)-3-phosphoshikimate + phosphate</text>
        <dbReference type="Rhea" id="RHEA:21256"/>
        <dbReference type="ChEBI" id="CHEBI:43474"/>
        <dbReference type="ChEBI" id="CHEBI:57701"/>
        <dbReference type="ChEBI" id="CHEBI:58702"/>
        <dbReference type="ChEBI" id="CHEBI:145989"/>
        <dbReference type="EC" id="2.5.1.19"/>
    </reaction>
    <physiologicalReaction direction="left-to-right" evidence="1">
        <dbReference type="Rhea" id="RHEA:21257"/>
    </physiologicalReaction>
</comment>
<comment type="pathway">
    <text evidence="1">Metabolic intermediate biosynthesis; chorismate biosynthesis; chorismate from D-erythrose 4-phosphate and phosphoenolpyruvate: step 6/7.</text>
</comment>
<comment type="subunit">
    <text evidence="1">Monomer.</text>
</comment>
<comment type="subcellular location">
    <subcellularLocation>
        <location evidence="1">Cytoplasm</location>
    </subcellularLocation>
</comment>
<comment type="similarity">
    <text evidence="1">Belongs to the EPSP synthase family.</text>
</comment>
<protein>
    <recommendedName>
        <fullName evidence="1">3-phosphoshikimate 1-carboxyvinyltransferase</fullName>
        <ecNumber evidence="1">2.5.1.19</ecNumber>
    </recommendedName>
    <alternativeName>
        <fullName evidence="1">5-enolpyruvylshikimate-3-phosphate synthase</fullName>
        <shortName evidence="1">EPSP synthase</shortName>
        <shortName evidence="1">EPSPS</shortName>
    </alternativeName>
</protein>
<gene>
    <name evidence="1" type="primary">aroA</name>
    <name type="ordered locus">Bphy_0744</name>
</gene>
<feature type="chain" id="PRO_1000099673" description="3-phosphoshikimate 1-carboxyvinyltransferase">
    <location>
        <begin position="1"/>
        <end position="434"/>
    </location>
</feature>
<feature type="active site" description="Proton acceptor" evidence="1">
    <location>
        <position position="320"/>
    </location>
</feature>
<feature type="binding site" evidence="1">
    <location>
        <position position="22"/>
    </location>
    <ligand>
        <name>3-phosphoshikimate</name>
        <dbReference type="ChEBI" id="CHEBI:145989"/>
    </ligand>
</feature>
<feature type="binding site" evidence="1">
    <location>
        <position position="22"/>
    </location>
    <ligand>
        <name>phosphoenolpyruvate</name>
        <dbReference type="ChEBI" id="CHEBI:58702"/>
    </ligand>
</feature>
<feature type="binding site" evidence="1">
    <location>
        <position position="23"/>
    </location>
    <ligand>
        <name>3-phosphoshikimate</name>
        <dbReference type="ChEBI" id="CHEBI:145989"/>
    </ligand>
</feature>
<feature type="binding site" evidence="1">
    <location>
        <position position="27"/>
    </location>
    <ligand>
        <name>3-phosphoshikimate</name>
        <dbReference type="ChEBI" id="CHEBI:145989"/>
    </ligand>
</feature>
<feature type="binding site" evidence="1">
    <location>
        <position position="93"/>
    </location>
    <ligand>
        <name>phosphoenolpyruvate</name>
        <dbReference type="ChEBI" id="CHEBI:58702"/>
    </ligand>
</feature>
<feature type="binding site" evidence="1">
    <location>
        <position position="121"/>
    </location>
    <ligand>
        <name>phosphoenolpyruvate</name>
        <dbReference type="ChEBI" id="CHEBI:58702"/>
    </ligand>
</feature>
<feature type="binding site" evidence="1">
    <location>
        <position position="168"/>
    </location>
    <ligand>
        <name>3-phosphoshikimate</name>
        <dbReference type="ChEBI" id="CHEBI:145989"/>
    </ligand>
</feature>
<feature type="binding site" evidence="1">
    <location>
        <position position="169"/>
    </location>
    <ligand>
        <name>3-phosphoshikimate</name>
        <dbReference type="ChEBI" id="CHEBI:145989"/>
    </ligand>
</feature>
<feature type="binding site" evidence="1">
    <location>
        <position position="170"/>
    </location>
    <ligand>
        <name>3-phosphoshikimate</name>
        <dbReference type="ChEBI" id="CHEBI:145989"/>
    </ligand>
</feature>
<feature type="binding site" evidence="1">
    <location>
        <position position="170"/>
    </location>
    <ligand>
        <name>phosphoenolpyruvate</name>
        <dbReference type="ChEBI" id="CHEBI:58702"/>
    </ligand>
</feature>
<feature type="binding site" evidence="1">
    <location>
        <position position="199"/>
    </location>
    <ligand>
        <name>3-phosphoshikimate</name>
        <dbReference type="ChEBI" id="CHEBI:145989"/>
    </ligand>
</feature>
<feature type="binding site" evidence="1">
    <location>
        <position position="320"/>
    </location>
    <ligand>
        <name>3-phosphoshikimate</name>
        <dbReference type="ChEBI" id="CHEBI:145989"/>
    </ligand>
</feature>
<feature type="binding site" evidence="1">
    <location>
        <position position="347"/>
    </location>
    <ligand>
        <name>3-phosphoshikimate</name>
        <dbReference type="ChEBI" id="CHEBI:145989"/>
    </ligand>
</feature>
<feature type="binding site" evidence="1">
    <location>
        <position position="351"/>
    </location>
    <ligand>
        <name>phosphoenolpyruvate</name>
        <dbReference type="ChEBI" id="CHEBI:58702"/>
    </ligand>
</feature>
<feature type="binding site" evidence="1">
    <location>
        <position position="394"/>
    </location>
    <ligand>
        <name>phosphoenolpyruvate</name>
        <dbReference type="ChEBI" id="CHEBI:58702"/>
    </ligand>
</feature>
<feature type="binding site" evidence="1">
    <location>
        <position position="419"/>
    </location>
    <ligand>
        <name>phosphoenolpyruvate</name>
        <dbReference type="ChEBI" id="CHEBI:58702"/>
    </ligand>
</feature>
<name>AROA_PARP8</name>
<dbReference type="EC" id="2.5.1.19" evidence="1"/>
<dbReference type="EMBL" id="CP001043">
    <property type="protein sequence ID" value="ACC69933.1"/>
    <property type="molecule type" value="Genomic_DNA"/>
</dbReference>
<dbReference type="RefSeq" id="WP_012400153.1">
    <property type="nucleotide sequence ID" value="NC_010622.1"/>
</dbReference>
<dbReference type="SMR" id="B2JF04"/>
<dbReference type="STRING" id="391038.Bphy_0744"/>
<dbReference type="KEGG" id="bph:Bphy_0744"/>
<dbReference type="eggNOG" id="COG0128">
    <property type="taxonomic scope" value="Bacteria"/>
</dbReference>
<dbReference type="HOGENOM" id="CLU_024321_0_0_4"/>
<dbReference type="OrthoDB" id="9809920at2"/>
<dbReference type="UniPathway" id="UPA00053">
    <property type="reaction ID" value="UER00089"/>
</dbReference>
<dbReference type="Proteomes" id="UP000001192">
    <property type="component" value="Chromosome 1"/>
</dbReference>
<dbReference type="GO" id="GO:0005737">
    <property type="term" value="C:cytoplasm"/>
    <property type="evidence" value="ECO:0007669"/>
    <property type="project" value="UniProtKB-SubCell"/>
</dbReference>
<dbReference type="GO" id="GO:0003866">
    <property type="term" value="F:3-phosphoshikimate 1-carboxyvinyltransferase activity"/>
    <property type="evidence" value="ECO:0007669"/>
    <property type="project" value="UniProtKB-UniRule"/>
</dbReference>
<dbReference type="GO" id="GO:0008652">
    <property type="term" value="P:amino acid biosynthetic process"/>
    <property type="evidence" value="ECO:0007669"/>
    <property type="project" value="UniProtKB-KW"/>
</dbReference>
<dbReference type="GO" id="GO:0009073">
    <property type="term" value="P:aromatic amino acid family biosynthetic process"/>
    <property type="evidence" value="ECO:0007669"/>
    <property type="project" value="UniProtKB-KW"/>
</dbReference>
<dbReference type="GO" id="GO:0009423">
    <property type="term" value="P:chorismate biosynthetic process"/>
    <property type="evidence" value="ECO:0007669"/>
    <property type="project" value="UniProtKB-UniRule"/>
</dbReference>
<dbReference type="CDD" id="cd01556">
    <property type="entry name" value="EPSP_synthase"/>
    <property type="match status" value="1"/>
</dbReference>
<dbReference type="FunFam" id="3.65.10.10:FF:000003">
    <property type="entry name" value="3-phosphoshikimate 1-carboxyvinyltransferase"/>
    <property type="match status" value="1"/>
</dbReference>
<dbReference type="FunFam" id="3.65.10.10:FF:000004">
    <property type="entry name" value="3-phosphoshikimate 1-carboxyvinyltransferase"/>
    <property type="match status" value="1"/>
</dbReference>
<dbReference type="Gene3D" id="3.65.10.10">
    <property type="entry name" value="Enolpyruvate transferase domain"/>
    <property type="match status" value="2"/>
</dbReference>
<dbReference type="HAMAP" id="MF_00210">
    <property type="entry name" value="EPSP_synth"/>
    <property type="match status" value="1"/>
</dbReference>
<dbReference type="InterPro" id="IPR001986">
    <property type="entry name" value="Enolpyruvate_Tfrase_dom"/>
</dbReference>
<dbReference type="InterPro" id="IPR036968">
    <property type="entry name" value="Enolpyruvate_Tfrase_sf"/>
</dbReference>
<dbReference type="InterPro" id="IPR006264">
    <property type="entry name" value="EPSP_synthase"/>
</dbReference>
<dbReference type="InterPro" id="IPR023193">
    <property type="entry name" value="EPSP_synthase_CS"/>
</dbReference>
<dbReference type="InterPro" id="IPR013792">
    <property type="entry name" value="RNA3'P_cycl/enolpyr_Trfase_a/b"/>
</dbReference>
<dbReference type="NCBIfam" id="TIGR01356">
    <property type="entry name" value="aroA"/>
    <property type="match status" value="1"/>
</dbReference>
<dbReference type="PANTHER" id="PTHR21090">
    <property type="entry name" value="AROM/DEHYDROQUINATE SYNTHASE"/>
    <property type="match status" value="1"/>
</dbReference>
<dbReference type="PANTHER" id="PTHR21090:SF5">
    <property type="entry name" value="PENTAFUNCTIONAL AROM POLYPEPTIDE"/>
    <property type="match status" value="1"/>
</dbReference>
<dbReference type="Pfam" id="PF00275">
    <property type="entry name" value="EPSP_synthase"/>
    <property type="match status" value="1"/>
</dbReference>
<dbReference type="PIRSF" id="PIRSF000505">
    <property type="entry name" value="EPSPS"/>
    <property type="match status" value="1"/>
</dbReference>
<dbReference type="SUPFAM" id="SSF55205">
    <property type="entry name" value="EPT/RTPC-like"/>
    <property type="match status" value="1"/>
</dbReference>
<dbReference type="PROSITE" id="PS00104">
    <property type="entry name" value="EPSP_SYNTHASE_1"/>
    <property type="match status" value="1"/>
</dbReference>
<dbReference type="PROSITE" id="PS00885">
    <property type="entry name" value="EPSP_SYNTHASE_2"/>
    <property type="match status" value="1"/>
</dbReference>
<proteinExistence type="inferred from homology"/>
<reference key="1">
    <citation type="journal article" date="2014" name="Stand. Genomic Sci.">
        <title>Complete genome sequence of Burkholderia phymatum STM815(T), a broad host range and efficient nitrogen-fixing symbiont of Mimosa species.</title>
        <authorList>
            <person name="Moulin L."/>
            <person name="Klonowska A."/>
            <person name="Caroline B."/>
            <person name="Booth K."/>
            <person name="Vriezen J.A."/>
            <person name="Melkonian R."/>
            <person name="James E.K."/>
            <person name="Young J.P."/>
            <person name="Bena G."/>
            <person name="Hauser L."/>
            <person name="Land M."/>
            <person name="Kyrpides N."/>
            <person name="Bruce D."/>
            <person name="Chain P."/>
            <person name="Copeland A."/>
            <person name="Pitluck S."/>
            <person name="Woyke T."/>
            <person name="Lizotte-Waniewski M."/>
            <person name="Bristow J."/>
            <person name="Riley M."/>
        </authorList>
    </citation>
    <scope>NUCLEOTIDE SEQUENCE [LARGE SCALE GENOMIC DNA]</scope>
    <source>
        <strain>DSM 17167 / CIP 108236 / LMG 21445 / STM815</strain>
    </source>
</reference>
<accession>B2JF04</accession>
<organism>
    <name type="scientific">Paraburkholderia phymatum (strain DSM 17167 / CIP 108236 / LMG 21445 / STM815)</name>
    <name type="common">Burkholderia phymatum</name>
    <dbReference type="NCBI Taxonomy" id="391038"/>
    <lineage>
        <taxon>Bacteria</taxon>
        <taxon>Pseudomonadati</taxon>
        <taxon>Pseudomonadota</taxon>
        <taxon>Betaproteobacteria</taxon>
        <taxon>Burkholderiales</taxon>
        <taxon>Burkholderiaceae</taxon>
        <taxon>Paraburkholderia</taxon>
    </lineage>
</organism>